<reference key="1">
    <citation type="journal article" date="2008" name="Science">
        <title>The Physcomitrella genome reveals evolutionary insights into the conquest of land by plants.</title>
        <authorList>
            <person name="Rensing S.A."/>
            <person name="Lang D."/>
            <person name="Zimmer A.D."/>
            <person name="Terry A."/>
            <person name="Salamov A."/>
            <person name="Shapiro H."/>
            <person name="Nishiyama T."/>
            <person name="Perroud P.-F."/>
            <person name="Lindquist E.A."/>
            <person name="Kamisugi Y."/>
            <person name="Tanahashi T."/>
            <person name="Sakakibara K."/>
            <person name="Fujita T."/>
            <person name="Oishi K."/>
            <person name="Shin-I T."/>
            <person name="Kuroki Y."/>
            <person name="Toyoda A."/>
            <person name="Suzuki Y."/>
            <person name="Hashimoto S.-I."/>
            <person name="Yamaguchi K."/>
            <person name="Sugano S."/>
            <person name="Kohara Y."/>
            <person name="Fujiyama A."/>
            <person name="Anterola A."/>
            <person name="Aoki S."/>
            <person name="Ashton N."/>
            <person name="Barbazuk W.B."/>
            <person name="Barker E."/>
            <person name="Bennetzen J.L."/>
            <person name="Blankenship R."/>
            <person name="Cho S.H."/>
            <person name="Dutcher S.K."/>
            <person name="Estelle M."/>
            <person name="Fawcett J.A."/>
            <person name="Gundlach H."/>
            <person name="Hanada K."/>
            <person name="Heyl A."/>
            <person name="Hicks K.A."/>
            <person name="Hughes J."/>
            <person name="Lohr M."/>
            <person name="Mayer K."/>
            <person name="Melkozernov A."/>
            <person name="Murata T."/>
            <person name="Nelson D.R."/>
            <person name="Pils B."/>
            <person name="Prigge M."/>
            <person name="Reiss B."/>
            <person name="Renner T."/>
            <person name="Rombauts S."/>
            <person name="Rushton P.J."/>
            <person name="Sanderfoot A."/>
            <person name="Schween G."/>
            <person name="Shiu S.-H."/>
            <person name="Stueber K."/>
            <person name="Theodoulou F.L."/>
            <person name="Tu H."/>
            <person name="Van de Peer Y."/>
            <person name="Verrier P.J."/>
            <person name="Waters E."/>
            <person name="Wood A."/>
            <person name="Yang L."/>
            <person name="Cove D."/>
            <person name="Cuming A.C."/>
            <person name="Hasebe M."/>
            <person name="Lucas S."/>
            <person name="Mishler B.D."/>
            <person name="Reski R."/>
            <person name="Grigoriev I.V."/>
            <person name="Quatrano R.S."/>
            <person name="Boore J.L."/>
        </authorList>
    </citation>
    <scope>NUCLEOTIDE SEQUENCE [LARGE SCALE GENOMIC DNA]</scope>
    <source>
        <strain>cv. Gransden 2004</strain>
    </source>
</reference>
<reference key="2">
    <citation type="journal article" date="2018" name="Plant J.">
        <title>The Physcomitrella patens chromosome-scale assembly reveals moss genome structure and evolution.</title>
        <authorList>
            <person name="Lang D."/>
            <person name="Ullrich K.K."/>
            <person name="Murat F."/>
            <person name="Fuchs J."/>
            <person name="Jenkins J."/>
            <person name="Haas F.B."/>
            <person name="Piednoel M."/>
            <person name="Gundlach H."/>
            <person name="Van Bel M."/>
            <person name="Meyberg R."/>
            <person name="Vives C."/>
            <person name="Morata J."/>
            <person name="Symeonidi A."/>
            <person name="Hiss M."/>
            <person name="Muchero W."/>
            <person name="Kamisugi Y."/>
            <person name="Saleh O."/>
            <person name="Blanc G."/>
            <person name="Decker E.L."/>
            <person name="van Gessel N."/>
            <person name="Grimwood J."/>
            <person name="Hayes R.D."/>
            <person name="Graham S.W."/>
            <person name="Gunter L.E."/>
            <person name="McDaniel S.F."/>
            <person name="Hoernstein S.N.W."/>
            <person name="Larsson A."/>
            <person name="Li F.W."/>
            <person name="Perroud P.F."/>
            <person name="Phillips J."/>
            <person name="Ranjan P."/>
            <person name="Rokshar D.S."/>
            <person name="Rothfels C.J."/>
            <person name="Schneider L."/>
            <person name="Shu S."/>
            <person name="Stevenson D.W."/>
            <person name="Thummler F."/>
            <person name="Tillich M."/>
            <person name="Villarreal Aguilar J.C."/>
            <person name="Widiez T."/>
            <person name="Wong G.K."/>
            <person name="Wymore A."/>
            <person name="Zhang Y."/>
            <person name="Zimmer A.D."/>
            <person name="Quatrano R.S."/>
            <person name="Mayer K.F.X."/>
            <person name="Goodstein D."/>
            <person name="Casacuberta J.M."/>
            <person name="Vandepoele K."/>
            <person name="Reski R."/>
            <person name="Cuming A.C."/>
            <person name="Tuskan G.A."/>
            <person name="Maumus F."/>
            <person name="Salse J."/>
            <person name="Schmutz J."/>
            <person name="Rensing S.A."/>
        </authorList>
    </citation>
    <scope>GENOME REANNOTATION</scope>
    <source>
        <strain>cv. Gransden 2004</strain>
    </source>
</reference>
<reference key="3">
    <citation type="journal article" date="2020" name="Cell">
        <title>DIX domain polymerization drives assembly of plant cell polarity complexes.</title>
        <authorList>
            <person name="van Dop M."/>
            <person name="Fiedler M."/>
            <person name="Mutte S."/>
            <person name="de Keijzer J."/>
            <person name="Olijslager L."/>
            <person name="Albrecht C."/>
            <person name="Liao C.Y."/>
            <person name="Janson M.E."/>
            <person name="Bienz M."/>
            <person name="Weijers D."/>
        </authorList>
    </citation>
    <scope>SUBUNIT</scope>
    <scope>GENE FAMILY</scope>
</reference>
<accession>A0A2K1J5A5</accession>
<comment type="function">
    <text evidence="1">SOSEKI proteins locally interpret global polarity cues and can influence cell division orientation to coordinate cell polarization relative to body axes.</text>
</comment>
<comment type="cofactor">
    <cofactor evidence="2">
        <name>Zn(2+)</name>
        <dbReference type="ChEBI" id="CHEBI:29105"/>
    </cofactor>
</comment>
<comment type="subunit">
    <text evidence="1 4">Homodimer (By similarity). Forms long polymer filaments with other SOKs proteins polymers crucial for polar localization and biological activity (PubMed:32004461).</text>
</comment>
<comment type="subcellular location">
    <subcellularLocation>
        <location evidence="1">Cell membrane</location>
        <topology evidence="1">Peripheral membrane protein</topology>
        <orientation evidence="1">Cytoplasmic side</orientation>
    </subcellularLocation>
</comment>
<comment type="domain">
    <text evidence="1">The DIX-like oligomerization domain is required for polymerization, edge localization and biological activity.</text>
</comment>
<comment type="miscellaneous">
    <text evidence="6">'Soseki' means cornerstone in Japanese.</text>
</comment>
<comment type="similarity">
    <text evidence="6">Belongs to the SOSEKI family.</text>
</comment>
<organism>
    <name type="scientific">Physcomitrium patens</name>
    <name type="common">Spreading-leaved earth moss</name>
    <name type="synonym">Physcomitrella patens</name>
    <dbReference type="NCBI Taxonomy" id="3218"/>
    <lineage>
        <taxon>Eukaryota</taxon>
        <taxon>Viridiplantae</taxon>
        <taxon>Streptophyta</taxon>
        <taxon>Embryophyta</taxon>
        <taxon>Bryophyta</taxon>
        <taxon>Bryophytina</taxon>
        <taxon>Bryopsida</taxon>
        <taxon>Funariidae</taxon>
        <taxon>Funariales</taxon>
        <taxon>Funariaceae</taxon>
        <taxon>Physcomitrium</taxon>
    </lineage>
</organism>
<dbReference type="EMBL" id="ABEU02000017">
    <property type="protein sequence ID" value="PNR36707.1"/>
    <property type="molecule type" value="Genomic_DNA"/>
</dbReference>
<dbReference type="SMR" id="A0A2K1J5A5"/>
<dbReference type="PaxDb" id="3218-PP1S68_283V6.1"/>
<dbReference type="EnsemblPlants" id="Pp3c17_23930V3.1">
    <property type="protein sequence ID" value="Pp3c17_23930V3.1"/>
    <property type="gene ID" value="Pp3c17_23930"/>
</dbReference>
<dbReference type="EnsemblPlants" id="Pp3c17_23930V3.2">
    <property type="protein sequence ID" value="Pp3c17_23930V3.2"/>
    <property type="gene ID" value="Pp3c17_23930"/>
</dbReference>
<dbReference type="Gramene" id="Pp3c17_23930V3.1">
    <property type="protein sequence ID" value="Pp3c17_23930V3.1"/>
    <property type="gene ID" value="Pp3c17_23930"/>
</dbReference>
<dbReference type="Gramene" id="Pp3c17_23930V3.2">
    <property type="protein sequence ID" value="Pp3c17_23930V3.2"/>
    <property type="gene ID" value="Pp3c17_23930"/>
</dbReference>
<dbReference type="InParanoid" id="A0A2K1J5A5"/>
<dbReference type="Proteomes" id="UP000006727">
    <property type="component" value="Chromosome 17"/>
</dbReference>
<dbReference type="GO" id="GO:0005886">
    <property type="term" value="C:plasma membrane"/>
    <property type="evidence" value="ECO:0007669"/>
    <property type="project" value="UniProtKB-SubCell"/>
</dbReference>
<dbReference type="GO" id="GO:0042803">
    <property type="term" value="F:protein homodimerization activity"/>
    <property type="evidence" value="ECO:0000250"/>
    <property type="project" value="UniProtKB"/>
</dbReference>
<dbReference type="GO" id="GO:0008270">
    <property type="term" value="F:zinc ion binding"/>
    <property type="evidence" value="ECO:0007669"/>
    <property type="project" value="UniProtKB-KW"/>
</dbReference>
<dbReference type="GO" id="GO:0051301">
    <property type="term" value="P:cell division"/>
    <property type="evidence" value="ECO:0007669"/>
    <property type="project" value="UniProtKB-KW"/>
</dbReference>
<dbReference type="GO" id="GO:1905392">
    <property type="term" value="P:plant organ morphogenesis"/>
    <property type="evidence" value="ECO:0000250"/>
    <property type="project" value="UniProtKB"/>
</dbReference>
<dbReference type="GO" id="GO:0051258">
    <property type="term" value="P:protein polymerization"/>
    <property type="evidence" value="ECO:0000314"/>
    <property type="project" value="UniProtKB"/>
</dbReference>
<dbReference type="GO" id="GO:0051302">
    <property type="term" value="P:regulation of cell division"/>
    <property type="evidence" value="ECO:0000250"/>
    <property type="project" value="UniProtKB"/>
</dbReference>
<dbReference type="GO" id="GO:0090708">
    <property type="term" value="P:specification of plant organ axis polarity"/>
    <property type="evidence" value="ECO:0000250"/>
    <property type="project" value="UniProtKB"/>
</dbReference>
<dbReference type="Gene3D" id="3.30.160.60">
    <property type="entry name" value="Classic Zinc Finger"/>
    <property type="match status" value="1"/>
</dbReference>
<dbReference type="InterPro" id="IPR010369">
    <property type="entry name" value="SOK"/>
</dbReference>
<dbReference type="InterPro" id="IPR048351">
    <property type="entry name" value="SOK_DIX"/>
</dbReference>
<dbReference type="InterPro" id="IPR049899">
    <property type="entry name" value="Znf_C2HC_C3H"/>
</dbReference>
<dbReference type="PANTHER" id="PTHR31083:SF6">
    <property type="entry name" value="PROTEIN SOSEKI 3"/>
    <property type="match status" value="1"/>
</dbReference>
<dbReference type="PANTHER" id="PTHR31083">
    <property type="entry name" value="UPSTREAM OF FLC PROTEIN (DUF966)"/>
    <property type="match status" value="1"/>
</dbReference>
<dbReference type="Pfam" id="PF06136">
    <property type="entry name" value="SOK"/>
    <property type="match status" value="1"/>
</dbReference>
<dbReference type="Pfam" id="PF13913">
    <property type="entry name" value="zf-C2HC_2"/>
    <property type="match status" value="1"/>
</dbReference>
<dbReference type="PROSITE" id="PS52027">
    <property type="entry name" value="ZF_C2HC_C3H"/>
    <property type="match status" value="1"/>
</dbReference>
<feature type="chain" id="PRO_0000452147" description="Protein SOSEKI 3">
    <location>
        <begin position="1"/>
        <end position="709"/>
    </location>
</feature>
<feature type="zinc finger region" description="C2HC/C3H-type" evidence="2">
    <location>
        <begin position="663"/>
        <end position="692"/>
    </location>
</feature>
<feature type="region of interest" description="DIX-like oligomerization domain" evidence="1">
    <location>
        <begin position="8"/>
        <end position="101"/>
    </location>
</feature>
<feature type="region of interest" description="Disordered" evidence="3">
    <location>
        <begin position="242"/>
        <end position="266"/>
    </location>
</feature>
<feature type="region of interest" description="Disordered" evidence="3">
    <location>
        <begin position="315"/>
        <end position="344"/>
    </location>
</feature>
<feature type="region of interest" description="Disordered" evidence="3">
    <location>
        <begin position="358"/>
        <end position="393"/>
    </location>
</feature>
<feature type="region of interest" description="Disordered" evidence="3">
    <location>
        <begin position="411"/>
        <end position="439"/>
    </location>
</feature>
<feature type="region of interest" description="Disordered" evidence="3">
    <location>
        <begin position="506"/>
        <end position="560"/>
    </location>
</feature>
<feature type="compositionally biased region" description="Basic and acidic residues" evidence="3">
    <location>
        <begin position="329"/>
        <end position="342"/>
    </location>
</feature>
<feature type="compositionally biased region" description="Basic and acidic residues" evidence="3">
    <location>
        <begin position="417"/>
        <end position="436"/>
    </location>
</feature>
<feature type="compositionally biased region" description="Polar residues" evidence="3">
    <location>
        <begin position="529"/>
        <end position="544"/>
    </location>
</feature>
<feature type="binding site" evidence="2">
    <location>
        <position position="667"/>
    </location>
    <ligand>
        <name>Zn(2+)</name>
        <dbReference type="ChEBI" id="CHEBI:29105"/>
    </ligand>
</feature>
<feature type="binding site" evidence="2">
    <location>
        <position position="670"/>
    </location>
    <ligand>
        <name>Zn(2+)</name>
        <dbReference type="ChEBI" id="CHEBI:29105"/>
    </ligand>
</feature>
<feature type="binding site" evidence="2">
    <location>
        <position position="682"/>
    </location>
    <ligand>
        <name>Zn(2+)</name>
        <dbReference type="ChEBI" id="CHEBI:29105"/>
    </ligand>
</feature>
<feature type="binding site" evidence="2">
    <location>
        <position position="686"/>
    </location>
    <ligand>
        <name>Zn(2+)</name>
        <dbReference type="ChEBI" id="CHEBI:29105"/>
    </ligand>
</feature>
<proteinExistence type="evidence at protein level"/>
<sequence length="709" mass="78642">MARGEDSSSVQVLYQLSWDGKLEHPHMIEVHYPPNQGGLRLRDVKKRLTTLRGHGINDSFSWSSKRNYKNEFIWNDLCDDDVIQPLRGSGEYVLRASELFDTFTNKPWEHPSKHSNERMQSSRTMSVDNVTLQQGLINVKLHSGALAREDDQPSGEKLCCSGRRSCINLEDCSSKGVAIDIPKNLQNLSVDQETIDVEKSDFCLSSSDNEVSPRLKTAADCITPVKDVGLVVMTRSTTVHGLHTPAPRSLTSPTEPPFSPGSAKRMWKKEIRKSLFRTSRNSSNVNPVLSGENAALDVDVPPITLSTQEDVSFWRDGRSKSASPSSLNELREVQNEKEKEAEQSTSQLIRLLWARWTGGSSKGKRTPQSTCEDPLPKSPEAKQMPRSRTKTPCKEIRSTNHIAGSLPVTCPSPAVDNKAHSSLDRQEIPPQEECKNRPSPMTLQSCEEITSPVTEIEQDVEIGDIKAIVEEQASNKFPEPEFQQNLRTEQIVLSVQIPDLHIDALDSPTSDTQGSPAEADIPKSATARVKTSNSLPRVKTTTSPKPLPPGFHKGTNDTKPVQIITPRRTPRTSIPLASPPPLVRTFNRVSVRSLSSIAAITLSPENDSAASNLSPENPIVKKRINFRERDEMPLIPGLTTLDWEKALQEAVTDCLPPPNFREILQECSTCGRTFKPDSLQVHMRGCHPPQYARAFSARASPHVVRSRAS</sequence>
<protein>
    <recommendedName>
        <fullName evidence="5">Protein SOSEKI 3</fullName>
        <shortName evidence="5">PpSOK3</shortName>
    </recommendedName>
</protein>
<gene>
    <name evidence="5" type="primary">SOK3</name>
    <name evidence="7" type="ORF">PHYPA_022558</name>
</gene>
<name>SOK3_PHYPA</name>
<evidence type="ECO:0000250" key="1">
    <source>
        <dbReference type="UniProtKB" id="Q9SYJ8"/>
    </source>
</evidence>
<evidence type="ECO:0000255" key="2">
    <source>
        <dbReference type="PROSITE-ProRule" id="PRU01371"/>
    </source>
</evidence>
<evidence type="ECO:0000256" key="3">
    <source>
        <dbReference type="SAM" id="MobiDB-lite"/>
    </source>
</evidence>
<evidence type="ECO:0000269" key="4">
    <source>
    </source>
</evidence>
<evidence type="ECO:0000303" key="5">
    <source>
    </source>
</evidence>
<evidence type="ECO:0000305" key="6"/>
<evidence type="ECO:0000312" key="7">
    <source>
        <dbReference type="EMBL" id="PNR36707.1"/>
    </source>
</evidence>
<keyword id="KW-0131">Cell cycle</keyword>
<keyword id="KW-0132">Cell division</keyword>
<keyword id="KW-1003">Cell membrane</keyword>
<keyword id="KW-0217">Developmental protein</keyword>
<keyword id="KW-0472">Membrane</keyword>
<keyword id="KW-0479">Metal-binding</keyword>
<keyword id="KW-1185">Reference proteome</keyword>
<keyword id="KW-0862">Zinc</keyword>
<keyword id="KW-0863">Zinc-finger</keyword>